<protein>
    <recommendedName>
        <fullName evidence="1">Glutamate 5-kinase</fullName>
        <ecNumber evidence="1">2.7.2.11</ecNumber>
    </recommendedName>
    <alternativeName>
        <fullName evidence="1">Gamma-glutamyl kinase</fullName>
        <shortName evidence="1">GK</shortName>
    </alternativeName>
</protein>
<sequence length="367" mass="39141">MSDSQTLVVKLGTSVLTGGSRRLNRAHIVELVRQCAQLHAAGHRIVIVTSGAIAAGREHLGYPELPATIASKQLLAAVGQSRLIQLWEQLFSIYGIHIGQMLLTRADMEDRERFLNARDTLRALLDNHIVPVINENDAVATAEIKVGDNDNLSALAAILAGADKLLLLTDQQGLFTADPRSNPQAELIKDVYGVDDALRSIAGDSVSGLGTGGMSTKLQAADVACRAGIDTIIASGSKPGVIGDVMEGISVGTRFHAQASPLENRKRWIFGAPPAGEITVDEGATAAMLERGSSLLPKGIKSVTGNFSRGEVIRICNLQGRDIAHGVSRYNSDALRRIAGHHSQQIDAILGYEYGPVAVHRDDMITR</sequence>
<organism>
    <name type="scientific">Salmonella dublin (strain CT_02021853)</name>
    <dbReference type="NCBI Taxonomy" id="439851"/>
    <lineage>
        <taxon>Bacteria</taxon>
        <taxon>Pseudomonadati</taxon>
        <taxon>Pseudomonadota</taxon>
        <taxon>Gammaproteobacteria</taxon>
        <taxon>Enterobacterales</taxon>
        <taxon>Enterobacteriaceae</taxon>
        <taxon>Salmonella</taxon>
    </lineage>
</organism>
<evidence type="ECO:0000255" key="1">
    <source>
        <dbReference type="HAMAP-Rule" id="MF_00456"/>
    </source>
</evidence>
<name>PROB_SALDC</name>
<reference key="1">
    <citation type="journal article" date="2011" name="J. Bacteriol.">
        <title>Comparative genomics of 28 Salmonella enterica isolates: evidence for CRISPR-mediated adaptive sublineage evolution.</title>
        <authorList>
            <person name="Fricke W.F."/>
            <person name="Mammel M.K."/>
            <person name="McDermott P.F."/>
            <person name="Tartera C."/>
            <person name="White D.G."/>
            <person name="Leclerc J.E."/>
            <person name="Ravel J."/>
            <person name="Cebula T.A."/>
        </authorList>
    </citation>
    <scope>NUCLEOTIDE SEQUENCE [LARGE SCALE GENOMIC DNA]</scope>
    <source>
        <strain>CT_02021853</strain>
    </source>
</reference>
<proteinExistence type="inferred from homology"/>
<gene>
    <name evidence="1" type="primary">proB</name>
    <name type="ordered locus">SeD_A0353</name>
</gene>
<feature type="chain" id="PRO_1000125256" description="Glutamate 5-kinase">
    <location>
        <begin position="1"/>
        <end position="367"/>
    </location>
</feature>
<feature type="domain" description="PUA" evidence="1">
    <location>
        <begin position="275"/>
        <end position="353"/>
    </location>
</feature>
<feature type="binding site" evidence="1">
    <location>
        <position position="10"/>
    </location>
    <ligand>
        <name>ATP</name>
        <dbReference type="ChEBI" id="CHEBI:30616"/>
    </ligand>
</feature>
<feature type="binding site" evidence="1">
    <location>
        <position position="50"/>
    </location>
    <ligand>
        <name>substrate</name>
    </ligand>
</feature>
<feature type="binding site" evidence="1">
    <location>
        <position position="137"/>
    </location>
    <ligand>
        <name>substrate</name>
    </ligand>
</feature>
<feature type="binding site" evidence="1">
    <location>
        <position position="149"/>
    </location>
    <ligand>
        <name>substrate</name>
    </ligand>
</feature>
<feature type="binding site" evidence="1">
    <location>
        <begin position="169"/>
        <end position="170"/>
    </location>
    <ligand>
        <name>ATP</name>
        <dbReference type="ChEBI" id="CHEBI:30616"/>
    </ligand>
</feature>
<feature type="binding site" evidence="1">
    <location>
        <begin position="211"/>
        <end position="217"/>
    </location>
    <ligand>
        <name>ATP</name>
        <dbReference type="ChEBI" id="CHEBI:30616"/>
    </ligand>
</feature>
<accession>B5FJX4</accession>
<comment type="function">
    <text evidence="1">Catalyzes the transfer of a phosphate group to glutamate to form L-glutamate 5-phosphate.</text>
</comment>
<comment type="catalytic activity">
    <reaction evidence="1">
        <text>L-glutamate + ATP = L-glutamyl 5-phosphate + ADP</text>
        <dbReference type="Rhea" id="RHEA:14877"/>
        <dbReference type="ChEBI" id="CHEBI:29985"/>
        <dbReference type="ChEBI" id="CHEBI:30616"/>
        <dbReference type="ChEBI" id="CHEBI:58274"/>
        <dbReference type="ChEBI" id="CHEBI:456216"/>
        <dbReference type="EC" id="2.7.2.11"/>
    </reaction>
</comment>
<comment type="pathway">
    <text evidence="1">Amino-acid biosynthesis; L-proline biosynthesis; L-glutamate 5-semialdehyde from L-glutamate: step 1/2.</text>
</comment>
<comment type="subcellular location">
    <subcellularLocation>
        <location evidence="1">Cytoplasm</location>
    </subcellularLocation>
</comment>
<comment type="similarity">
    <text evidence="1">Belongs to the glutamate 5-kinase family.</text>
</comment>
<keyword id="KW-0028">Amino-acid biosynthesis</keyword>
<keyword id="KW-0067">ATP-binding</keyword>
<keyword id="KW-0963">Cytoplasm</keyword>
<keyword id="KW-0418">Kinase</keyword>
<keyword id="KW-0547">Nucleotide-binding</keyword>
<keyword id="KW-0641">Proline biosynthesis</keyword>
<keyword id="KW-0808">Transferase</keyword>
<dbReference type="EC" id="2.7.2.11" evidence="1"/>
<dbReference type="EMBL" id="CP001144">
    <property type="protein sequence ID" value="ACH74473.1"/>
    <property type="molecule type" value="Genomic_DNA"/>
</dbReference>
<dbReference type="RefSeq" id="WP_001285275.1">
    <property type="nucleotide sequence ID" value="NC_011205.1"/>
</dbReference>
<dbReference type="SMR" id="B5FJX4"/>
<dbReference type="KEGG" id="sed:SeD_A0353"/>
<dbReference type="HOGENOM" id="CLU_025400_2_0_6"/>
<dbReference type="UniPathway" id="UPA00098">
    <property type="reaction ID" value="UER00359"/>
</dbReference>
<dbReference type="Proteomes" id="UP000008322">
    <property type="component" value="Chromosome"/>
</dbReference>
<dbReference type="GO" id="GO:0005829">
    <property type="term" value="C:cytosol"/>
    <property type="evidence" value="ECO:0007669"/>
    <property type="project" value="TreeGrafter"/>
</dbReference>
<dbReference type="GO" id="GO:0005524">
    <property type="term" value="F:ATP binding"/>
    <property type="evidence" value="ECO:0007669"/>
    <property type="project" value="UniProtKB-KW"/>
</dbReference>
<dbReference type="GO" id="GO:0004349">
    <property type="term" value="F:glutamate 5-kinase activity"/>
    <property type="evidence" value="ECO:0007669"/>
    <property type="project" value="UniProtKB-UniRule"/>
</dbReference>
<dbReference type="GO" id="GO:0003723">
    <property type="term" value="F:RNA binding"/>
    <property type="evidence" value="ECO:0007669"/>
    <property type="project" value="InterPro"/>
</dbReference>
<dbReference type="GO" id="GO:0055129">
    <property type="term" value="P:L-proline biosynthetic process"/>
    <property type="evidence" value="ECO:0007669"/>
    <property type="project" value="UniProtKB-UniRule"/>
</dbReference>
<dbReference type="CDD" id="cd04242">
    <property type="entry name" value="AAK_G5K_ProB"/>
    <property type="match status" value="1"/>
</dbReference>
<dbReference type="CDD" id="cd21157">
    <property type="entry name" value="PUA_G5K"/>
    <property type="match status" value="1"/>
</dbReference>
<dbReference type="FunFam" id="2.30.130.10:FF:000003">
    <property type="entry name" value="Glutamate 5-kinase"/>
    <property type="match status" value="1"/>
</dbReference>
<dbReference type="FunFam" id="3.40.1160.10:FF:000006">
    <property type="entry name" value="Glutamate 5-kinase"/>
    <property type="match status" value="1"/>
</dbReference>
<dbReference type="Gene3D" id="3.40.1160.10">
    <property type="entry name" value="Acetylglutamate kinase-like"/>
    <property type="match status" value="2"/>
</dbReference>
<dbReference type="Gene3D" id="2.30.130.10">
    <property type="entry name" value="PUA domain"/>
    <property type="match status" value="1"/>
</dbReference>
<dbReference type="HAMAP" id="MF_00456">
    <property type="entry name" value="ProB"/>
    <property type="match status" value="1"/>
</dbReference>
<dbReference type="InterPro" id="IPR036393">
    <property type="entry name" value="AceGlu_kinase-like_sf"/>
</dbReference>
<dbReference type="InterPro" id="IPR001048">
    <property type="entry name" value="Asp/Glu/Uridylate_kinase"/>
</dbReference>
<dbReference type="InterPro" id="IPR041739">
    <property type="entry name" value="G5K_ProB"/>
</dbReference>
<dbReference type="InterPro" id="IPR001057">
    <property type="entry name" value="Glu/AcGlu_kinase"/>
</dbReference>
<dbReference type="InterPro" id="IPR011529">
    <property type="entry name" value="Glu_5kinase"/>
</dbReference>
<dbReference type="InterPro" id="IPR005715">
    <property type="entry name" value="Glu_5kinase/COase_Synthase"/>
</dbReference>
<dbReference type="InterPro" id="IPR019797">
    <property type="entry name" value="Glutamate_5-kinase_CS"/>
</dbReference>
<dbReference type="InterPro" id="IPR002478">
    <property type="entry name" value="PUA"/>
</dbReference>
<dbReference type="InterPro" id="IPR015947">
    <property type="entry name" value="PUA-like_sf"/>
</dbReference>
<dbReference type="InterPro" id="IPR036974">
    <property type="entry name" value="PUA_sf"/>
</dbReference>
<dbReference type="NCBIfam" id="TIGR01027">
    <property type="entry name" value="proB"/>
    <property type="match status" value="1"/>
</dbReference>
<dbReference type="PANTHER" id="PTHR43654">
    <property type="entry name" value="GLUTAMATE 5-KINASE"/>
    <property type="match status" value="1"/>
</dbReference>
<dbReference type="PANTHER" id="PTHR43654:SF1">
    <property type="entry name" value="ISOPENTENYL PHOSPHATE KINASE"/>
    <property type="match status" value="1"/>
</dbReference>
<dbReference type="Pfam" id="PF00696">
    <property type="entry name" value="AA_kinase"/>
    <property type="match status" value="1"/>
</dbReference>
<dbReference type="Pfam" id="PF01472">
    <property type="entry name" value="PUA"/>
    <property type="match status" value="1"/>
</dbReference>
<dbReference type="PIRSF" id="PIRSF000729">
    <property type="entry name" value="GK"/>
    <property type="match status" value="1"/>
</dbReference>
<dbReference type="PRINTS" id="PR00474">
    <property type="entry name" value="GLU5KINASE"/>
</dbReference>
<dbReference type="SMART" id="SM00359">
    <property type="entry name" value="PUA"/>
    <property type="match status" value="1"/>
</dbReference>
<dbReference type="SUPFAM" id="SSF53633">
    <property type="entry name" value="Carbamate kinase-like"/>
    <property type="match status" value="1"/>
</dbReference>
<dbReference type="SUPFAM" id="SSF88697">
    <property type="entry name" value="PUA domain-like"/>
    <property type="match status" value="1"/>
</dbReference>
<dbReference type="PROSITE" id="PS00902">
    <property type="entry name" value="GLUTAMATE_5_KINASE"/>
    <property type="match status" value="1"/>
</dbReference>
<dbReference type="PROSITE" id="PS50890">
    <property type="entry name" value="PUA"/>
    <property type="match status" value="1"/>
</dbReference>